<proteinExistence type="inferred from homology"/>
<sequence length="379" mass="40840">MNNTEYYERLGVDKNASQDEIKKAYRKMSKKYHPDLNKEEGAEDKYKEVQEAYETLSDEQKRAAYDQYGEAGRNGGFGGGGFGGASGFSGFGGRSGGFGGFEDIFSSFFGGGGAQVNPNAPRQGDDLQYRINLKFEEAIFGVEKQVKYNREELCHTCGGSGAKAGTHPETCHKCGGRGQINVVRDTPLGRMQTQTTCDVCHGTGKEIKEKSTTCHGSGHEKVAHTVKVTVPAGVETGQKMRLQGQGDAGVNGGPYGDLYVVFQVEASDKFERDGAEIYYKMPMDFVQAALGDEVEVPTVHGNVKLKIPAGTQTGANFRLKGKGAPKLRGSGNGDQYVIINIVTPKNMNQAQKEALQAFAKASGIEVSGSGQKGFFDKFK</sequence>
<accession>Q93Q66</accession>
<name>DNAJ_LACLC</name>
<protein>
    <recommendedName>
        <fullName evidence="1">Chaperone protein DnaJ</fullName>
    </recommendedName>
</protein>
<dbReference type="EMBL" id="AF280940">
    <property type="protein sequence ID" value="AAK69493.1"/>
    <property type="molecule type" value="Genomic_DNA"/>
</dbReference>
<dbReference type="SMR" id="Q93Q66"/>
<dbReference type="GO" id="GO:0005737">
    <property type="term" value="C:cytoplasm"/>
    <property type="evidence" value="ECO:0007669"/>
    <property type="project" value="UniProtKB-SubCell"/>
</dbReference>
<dbReference type="GO" id="GO:0005524">
    <property type="term" value="F:ATP binding"/>
    <property type="evidence" value="ECO:0007669"/>
    <property type="project" value="InterPro"/>
</dbReference>
<dbReference type="GO" id="GO:0031072">
    <property type="term" value="F:heat shock protein binding"/>
    <property type="evidence" value="ECO:0007669"/>
    <property type="project" value="InterPro"/>
</dbReference>
<dbReference type="GO" id="GO:0051082">
    <property type="term" value="F:unfolded protein binding"/>
    <property type="evidence" value="ECO:0007669"/>
    <property type="project" value="UniProtKB-UniRule"/>
</dbReference>
<dbReference type="GO" id="GO:0008270">
    <property type="term" value="F:zinc ion binding"/>
    <property type="evidence" value="ECO:0007669"/>
    <property type="project" value="UniProtKB-UniRule"/>
</dbReference>
<dbReference type="GO" id="GO:0051085">
    <property type="term" value="P:chaperone cofactor-dependent protein refolding"/>
    <property type="evidence" value="ECO:0007669"/>
    <property type="project" value="TreeGrafter"/>
</dbReference>
<dbReference type="GO" id="GO:0006260">
    <property type="term" value="P:DNA replication"/>
    <property type="evidence" value="ECO:0007669"/>
    <property type="project" value="UniProtKB-KW"/>
</dbReference>
<dbReference type="GO" id="GO:0042026">
    <property type="term" value="P:protein refolding"/>
    <property type="evidence" value="ECO:0007669"/>
    <property type="project" value="TreeGrafter"/>
</dbReference>
<dbReference type="GO" id="GO:0009408">
    <property type="term" value="P:response to heat"/>
    <property type="evidence" value="ECO:0007669"/>
    <property type="project" value="InterPro"/>
</dbReference>
<dbReference type="CDD" id="cd06257">
    <property type="entry name" value="DnaJ"/>
    <property type="match status" value="1"/>
</dbReference>
<dbReference type="CDD" id="cd10747">
    <property type="entry name" value="DnaJ_C"/>
    <property type="match status" value="1"/>
</dbReference>
<dbReference type="FunFam" id="1.10.287.110:FF:000031">
    <property type="entry name" value="Molecular chaperone DnaJ"/>
    <property type="match status" value="1"/>
</dbReference>
<dbReference type="FunFam" id="2.10.230.10:FF:000002">
    <property type="entry name" value="Molecular chaperone DnaJ"/>
    <property type="match status" value="1"/>
</dbReference>
<dbReference type="FunFam" id="2.60.260.20:FF:000004">
    <property type="entry name" value="Molecular chaperone DnaJ"/>
    <property type="match status" value="1"/>
</dbReference>
<dbReference type="Gene3D" id="1.10.287.110">
    <property type="entry name" value="DnaJ domain"/>
    <property type="match status" value="1"/>
</dbReference>
<dbReference type="Gene3D" id="2.10.230.10">
    <property type="entry name" value="Heat shock protein DnaJ, cysteine-rich domain"/>
    <property type="match status" value="1"/>
</dbReference>
<dbReference type="Gene3D" id="2.60.260.20">
    <property type="entry name" value="Urease metallochaperone UreE, N-terminal domain"/>
    <property type="match status" value="2"/>
</dbReference>
<dbReference type="HAMAP" id="MF_01152">
    <property type="entry name" value="DnaJ"/>
    <property type="match status" value="1"/>
</dbReference>
<dbReference type="InterPro" id="IPR012724">
    <property type="entry name" value="DnaJ"/>
</dbReference>
<dbReference type="InterPro" id="IPR002939">
    <property type="entry name" value="DnaJ_C"/>
</dbReference>
<dbReference type="InterPro" id="IPR001623">
    <property type="entry name" value="DnaJ_domain"/>
</dbReference>
<dbReference type="InterPro" id="IPR018253">
    <property type="entry name" value="DnaJ_domain_CS"/>
</dbReference>
<dbReference type="InterPro" id="IPR008971">
    <property type="entry name" value="HSP40/DnaJ_pept-bd"/>
</dbReference>
<dbReference type="InterPro" id="IPR001305">
    <property type="entry name" value="HSP_DnaJ_Cys-rich_dom"/>
</dbReference>
<dbReference type="InterPro" id="IPR036410">
    <property type="entry name" value="HSP_DnaJ_Cys-rich_dom_sf"/>
</dbReference>
<dbReference type="InterPro" id="IPR036869">
    <property type="entry name" value="J_dom_sf"/>
</dbReference>
<dbReference type="NCBIfam" id="TIGR02349">
    <property type="entry name" value="DnaJ_bact"/>
    <property type="match status" value="1"/>
</dbReference>
<dbReference type="NCBIfam" id="NF008035">
    <property type="entry name" value="PRK10767.1"/>
    <property type="match status" value="1"/>
</dbReference>
<dbReference type="NCBIfam" id="NF010869">
    <property type="entry name" value="PRK14276.1"/>
    <property type="match status" value="1"/>
</dbReference>
<dbReference type="PANTHER" id="PTHR43096:SF48">
    <property type="entry name" value="CHAPERONE PROTEIN DNAJ"/>
    <property type="match status" value="1"/>
</dbReference>
<dbReference type="PANTHER" id="PTHR43096">
    <property type="entry name" value="DNAJ HOMOLOG 1, MITOCHONDRIAL-RELATED"/>
    <property type="match status" value="1"/>
</dbReference>
<dbReference type="Pfam" id="PF00226">
    <property type="entry name" value="DnaJ"/>
    <property type="match status" value="1"/>
</dbReference>
<dbReference type="Pfam" id="PF01556">
    <property type="entry name" value="DnaJ_C"/>
    <property type="match status" value="1"/>
</dbReference>
<dbReference type="Pfam" id="PF00684">
    <property type="entry name" value="DnaJ_CXXCXGXG"/>
    <property type="match status" value="1"/>
</dbReference>
<dbReference type="PRINTS" id="PR00625">
    <property type="entry name" value="JDOMAIN"/>
</dbReference>
<dbReference type="SMART" id="SM00271">
    <property type="entry name" value="DnaJ"/>
    <property type="match status" value="1"/>
</dbReference>
<dbReference type="SUPFAM" id="SSF46565">
    <property type="entry name" value="Chaperone J-domain"/>
    <property type="match status" value="1"/>
</dbReference>
<dbReference type="SUPFAM" id="SSF57938">
    <property type="entry name" value="DnaJ/Hsp40 cysteine-rich domain"/>
    <property type="match status" value="1"/>
</dbReference>
<dbReference type="SUPFAM" id="SSF49493">
    <property type="entry name" value="HSP40/DnaJ peptide-binding domain"/>
    <property type="match status" value="2"/>
</dbReference>
<dbReference type="PROSITE" id="PS00636">
    <property type="entry name" value="DNAJ_1"/>
    <property type="match status" value="1"/>
</dbReference>
<dbReference type="PROSITE" id="PS50076">
    <property type="entry name" value="DNAJ_2"/>
    <property type="match status" value="1"/>
</dbReference>
<dbReference type="PROSITE" id="PS51188">
    <property type="entry name" value="ZF_CR"/>
    <property type="match status" value="1"/>
</dbReference>
<reference key="1">
    <citation type="submission" date="2000-06" db="EMBL/GenBank/DDBJ databases">
        <title>Analysis of heat shock mutants.</title>
        <authorList>
            <person name="Soerensen K.I."/>
            <person name="Kilstrup M."/>
        </authorList>
    </citation>
    <scope>NUCLEOTIDE SEQUENCE [GENOMIC DNA]</scope>
</reference>
<feature type="chain" id="PRO_0000070803" description="Chaperone protein DnaJ">
    <location>
        <begin position="1"/>
        <end position="379"/>
    </location>
</feature>
<feature type="domain" description="J" evidence="1">
    <location>
        <begin position="5"/>
        <end position="69"/>
    </location>
</feature>
<feature type="repeat" description="CXXCXGXG motif">
    <location>
        <begin position="154"/>
        <end position="161"/>
    </location>
</feature>
<feature type="repeat" description="CXXCXGXG motif">
    <location>
        <begin position="171"/>
        <end position="178"/>
    </location>
</feature>
<feature type="repeat" description="CXXCXGXG motif">
    <location>
        <begin position="197"/>
        <end position="204"/>
    </location>
</feature>
<feature type="repeat" description="CXXCXGXG motif">
    <location>
        <begin position="211"/>
        <end position="218"/>
    </location>
</feature>
<feature type="zinc finger region" description="CR-type" evidence="1">
    <location>
        <begin position="141"/>
        <end position="223"/>
    </location>
</feature>
<feature type="binding site" evidence="1">
    <location>
        <position position="154"/>
    </location>
    <ligand>
        <name>Zn(2+)</name>
        <dbReference type="ChEBI" id="CHEBI:29105"/>
        <label>1</label>
    </ligand>
</feature>
<feature type="binding site" evidence="1">
    <location>
        <position position="157"/>
    </location>
    <ligand>
        <name>Zn(2+)</name>
        <dbReference type="ChEBI" id="CHEBI:29105"/>
        <label>1</label>
    </ligand>
</feature>
<feature type="binding site" evidence="1">
    <location>
        <position position="171"/>
    </location>
    <ligand>
        <name>Zn(2+)</name>
        <dbReference type="ChEBI" id="CHEBI:29105"/>
        <label>2</label>
    </ligand>
</feature>
<feature type="binding site" evidence="1">
    <location>
        <position position="174"/>
    </location>
    <ligand>
        <name>Zn(2+)</name>
        <dbReference type="ChEBI" id="CHEBI:29105"/>
        <label>2</label>
    </ligand>
</feature>
<feature type="binding site" evidence="1">
    <location>
        <position position="197"/>
    </location>
    <ligand>
        <name>Zn(2+)</name>
        <dbReference type="ChEBI" id="CHEBI:29105"/>
        <label>2</label>
    </ligand>
</feature>
<feature type="binding site" evidence="1">
    <location>
        <position position="200"/>
    </location>
    <ligand>
        <name>Zn(2+)</name>
        <dbReference type="ChEBI" id="CHEBI:29105"/>
        <label>2</label>
    </ligand>
</feature>
<feature type="binding site" evidence="1">
    <location>
        <position position="214"/>
    </location>
    <ligand>
        <name>Zn(2+)</name>
        <dbReference type="ChEBI" id="CHEBI:29105"/>
        <label>1</label>
    </ligand>
</feature>
<comment type="function">
    <text evidence="1">Participates actively in the response to hyperosmotic and heat shock by preventing the aggregation of stress-denatured proteins and by disaggregating proteins, also in an autonomous, DnaK-independent fashion. Unfolded proteins bind initially to DnaJ; upon interaction with the DnaJ-bound protein, DnaK hydrolyzes its bound ATP, resulting in the formation of a stable complex. GrpE releases ADP from DnaK; ATP binding to DnaK triggers the release of the substrate protein, thus completing the reaction cycle. Several rounds of ATP-dependent interactions between DnaJ, DnaK and GrpE are required for fully efficient folding. Also involved, together with DnaK and GrpE, in the DNA replication of plasmids through activation of initiation proteins.</text>
</comment>
<comment type="cofactor">
    <cofactor evidence="1">
        <name>Zn(2+)</name>
        <dbReference type="ChEBI" id="CHEBI:29105"/>
    </cofactor>
    <text evidence="1">Binds 2 Zn(2+) ions per monomer.</text>
</comment>
<comment type="subunit">
    <text evidence="1">Homodimer.</text>
</comment>
<comment type="subcellular location">
    <subcellularLocation>
        <location evidence="1">Cytoplasm</location>
    </subcellularLocation>
</comment>
<comment type="domain">
    <text evidence="1">The J domain is necessary and sufficient to stimulate DnaK ATPase activity. Zinc center 1 plays an important role in the autonomous, DnaK-independent chaperone activity of DnaJ. Zinc center 2 is essential for interaction with DnaK and for DnaJ activity.</text>
</comment>
<comment type="similarity">
    <text evidence="1">Belongs to the DnaJ family.</text>
</comment>
<comment type="caution">
    <text evidence="2">Ser-211 is present instead of the conserved Cys which is expected to be a metal-binding residue.</text>
</comment>
<keyword id="KW-0143">Chaperone</keyword>
<keyword id="KW-0963">Cytoplasm</keyword>
<keyword id="KW-0235">DNA replication</keyword>
<keyword id="KW-0479">Metal-binding</keyword>
<keyword id="KW-0677">Repeat</keyword>
<keyword id="KW-0346">Stress response</keyword>
<keyword id="KW-0862">Zinc</keyword>
<keyword id="KW-0863">Zinc-finger</keyword>
<organism>
    <name type="scientific">Lactococcus lactis subsp. cremoris</name>
    <name type="common">Streptococcus cremoris</name>
    <dbReference type="NCBI Taxonomy" id="1359"/>
    <lineage>
        <taxon>Bacteria</taxon>
        <taxon>Bacillati</taxon>
        <taxon>Bacillota</taxon>
        <taxon>Bacilli</taxon>
        <taxon>Lactobacillales</taxon>
        <taxon>Streptococcaceae</taxon>
        <taxon>Lactococcus</taxon>
    </lineage>
</organism>
<gene>
    <name evidence="1" type="primary">dnaJ</name>
</gene>
<evidence type="ECO:0000255" key="1">
    <source>
        <dbReference type="HAMAP-Rule" id="MF_01152"/>
    </source>
</evidence>
<evidence type="ECO:0000305" key="2"/>